<evidence type="ECO:0000305" key="1"/>
<sequence length="620" mass="70238">MRRSVCYVNPSIARAGQISTWKFLYSLATPLPAGTKCKFDLAGSGKPTDWEAPATDLSQTRNVIYAEMPEGEIIEATAIPVKDNPVPQFEFTLPYELQVGETLTIVMGASPNHPQVDDAGNGAQLFAQRRKPFYLYIDPTGEGNYDEPDVFSMDIRGNVLKKIEIFTPSYVVKNKRFDITVRFEDEFGNLTNFSPEETRIELSYEHLRENLNWQLFIPETGFVILPNLYFNEPGIYRIQLKNLSTQEIFISAPIKCFADSAPNLMWGLLHGESERVDSEENIETCMRYFRDDRALNFYASSSFENQENLSPDIWKLINQTVSDFNEEDRFITLSGFQYSGEPHLEGVRHILHTKETKSHSKHKEYKHIPLAKLYKSTVNHDMISIPSFTASKEHGFDFENFYPEFERVVEIYNAWGSSETTAALNNPFPIQGKDSEDPRGTVIEGLKKNLRFGFVAGGLDDRGIYKDYFDSPQVQYSPGLTAIICNKYTRESLVEALFARHCYATTGPRIVLSFNITSAPMGSELSTGSKPGLNVNRHISGHVAGTALLKTVEIIRNGEVLHTFFPDSNNLDYEYDDMVPLSSVTLKDPNGKAPFVFYYLRVTQADNAMAWSSPIWVDLN</sequence>
<reference key="1">
    <citation type="journal article" date="1999" name="Nat. Genet.">
        <title>Comparative genomes of Chlamydia pneumoniae and C. trachomatis.</title>
        <authorList>
            <person name="Kalman S."/>
            <person name="Mitchell W.P."/>
            <person name="Marathe R."/>
            <person name="Lammel C.J."/>
            <person name="Fan J."/>
            <person name="Hyman R.W."/>
            <person name="Olinger L."/>
            <person name="Grimwood J."/>
            <person name="Davis R.W."/>
            <person name="Stephens R.S."/>
        </authorList>
    </citation>
    <scope>NUCLEOTIDE SEQUENCE [LARGE SCALE GENOMIC DNA]</scope>
    <source>
        <strain>CWL029</strain>
    </source>
</reference>
<reference key="2">
    <citation type="journal article" date="2000" name="Nucleic Acids Res.">
        <title>Genome sequences of Chlamydia trachomatis MoPn and Chlamydia pneumoniae AR39.</title>
        <authorList>
            <person name="Read T.D."/>
            <person name="Brunham R.C."/>
            <person name="Shen C."/>
            <person name="Gill S.R."/>
            <person name="Heidelberg J.F."/>
            <person name="White O."/>
            <person name="Hickey E.K."/>
            <person name="Peterson J.D."/>
            <person name="Utterback T.R."/>
            <person name="Berry K.J."/>
            <person name="Bass S."/>
            <person name="Linher K.D."/>
            <person name="Weidman J.F."/>
            <person name="Khouri H.M."/>
            <person name="Craven B."/>
            <person name="Bowman C."/>
            <person name="Dodson R.J."/>
            <person name="Gwinn M.L."/>
            <person name="Nelson W.C."/>
            <person name="DeBoy R.T."/>
            <person name="Kolonay J.F."/>
            <person name="McClarty G."/>
            <person name="Salzberg S.L."/>
            <person name="Eisen J.A."/>
            <person name="Fraser C.M."/>
        </authorList>
    </citation>
    <scope>NUCLEOTIDE SEQUENCE [LARGE SCALE GENOMIC DNA]</scope>
    <source>
        <strain>AR39</strain>
    </source>
</reference>
<reference key="3">
    <citation type="journal article" date="2000" name="Nucleic Acids Res.">
        <title>Comparison of whole genome sequences of Chlamydia pneumoniae J138 from Japan and CWL029 from USA.</title>
        <authorList>
            <person name="Shirai M."/>
            <person name="Hirakawa H."/>
            <person name="Kimoto M."/>
            <person name="Tabuchi M."/>
            <person name="Kishi F."/>
            <person name="Ouchi K."/>
            <person name="Shiba T."/>
            <person name="Ishii K."/>
            <person name="Hattori M."/>
            <person name="Kuhara S."/>
            <person name="Nakazawa T."/>
        </authorList>
    </citation>
    <scope>NUCLEOTIDE SEQUENCE [LARGE SCALE GENOMIC DNA]</scope>
    <source>
        <strain>J138</strain>
    </source>
</reference>
<reference key="4">
    <citation type="submission" date="2002-05" db="EMBL/GenBank/DDBJ databases">
        <title>The genome sequence of Chlamydia pneumoniae TW183 and comparison with other Chlamydia strains based on whole genome sequence analysis.</title>
        <authorList>
            <person name="Geng M.M."/>
            <person name="Schuhmacher A."/>
            <person name="Muehldorfer I."/>
            <person name="Bensch K.W."/>
            <person name="Schaefer K.P."/>
            <person name="Schneider S."/>
            <person name="Pohl T."/>
            <person name="Essig A."/>
            <person name="Marre R."/>
            <person name="Melchers K."/>
        </authorList>
    </citation>
    <scope>NUCLEOTIDE SEQUENCE [LARGE SCALE GENOMIC DNA]</scope>
    <source>
        <strain>TW-183</strain>
    </source>
</reference>
<dbReference type="EMBL" id="AE001363">
    <property type="protein sequence ID" value="AAD18652.1"/>
    <property type="molecule type" value="Genomic_DNA"/>
</dbReference>
<dbReference type="EMBL" id="AE002161">
    <property type="protein sequence ID" value="AAF38107.1"/>
    <property type="molecule type" value="Genomic_DNA"/>
</dbReference>
<dbReference type="EMBL" id="BA000008">
    <property type="protein sequence ID" value="BAA98718.1"/>
    <property type="molecule type" value="Genomic_DNA"/>
</dbReference>
<dbReference type="EMBL" id="AE009440">
    <property type="protein sequence ID" value="AAP98462.1"/>
    <property type="molecule type" value="Genomic_DNA"/>
</dbReference>
<dbReference type="PIR" id="D86554">
    <property type="entry name" value="D86554"/>
</dbReference>
<dbReference type="PIR" id="F72069">
    <property type="entry name" value="F72069"/>
</dbReference>
<dbReference type="RefSeq" id="NP_224708.1">
    <property type="nucleotide sequence ID" value="NC_000922.1"/>
</dbReference>
<dbReference type="RefSeq" id="WP_010883150.1">
    <property type="nucleotide sequence ID" value="NZ_LN847257.1"/>
</dbReference>
<dbReference type="STRING" id="406984.CPK_ORF01027"/>
<dbReference type="GeneID" id="45050554"/>
<dbReference type="KEGG" id="cpa:CP_0242"/>
<dbReference type="KEGG" id="cpj:CPj0512"/>
<dbReference type="KEGG" id="cpn:CPn_0512"/>
<dbReference type="KEGG" id="cpt:CpB0533"/>
<dbReference type="PATRIC" id="fig|115713.3.peg.571"/>
<dbReference type="eggNOG" id="COG4692">
    <property type="taxonomic scope" value="Bacteria"/>
</dbReference>
<dbReference type="HOGENOM" id="CLU_030250_0_0_0"/>
<dbReference type="OrthoDB" id="543560at2"/>
<dbReference type="Proteomes" id="UP000000583">
    <property type="component" value="Chromosome"/>
</dbReference>
<dbReference type="Proteomes" id="UP000000801">
    <property type="component" value="Chromosome"/>
</dbReference>
<dbReference type="InterPro" id="IPR022028">
    <property type="entry name" value="DUF3604"/>
</dbReference>
<dbReference type="Pfam" id="PF12228">
    <property type="entry name" value="DUF3604"/>
    <property type="match status" value="1"/>
</dbReference>
<gene>
    <name type="ordered locus">CPn_0512</name>
    <name type="ordered locus">CP_0242</name>
    <name type="ordered locus">CPj0512</name>
    <name type="ordered locus">CpB0533</name>
</gene>
<comment type="similarity">
    <text evidence="1">Belongs to the chlamydial CPn_0512/CT_425/TC_0708 family.</text>
</comment>
<proteinExistence type="inferred from homology"/>
<feature type="chain" id="PRO_0000218393" description="Uncharacterized protein CPn_0512/CP_0242/CPj0512/CpB0533">
    <location>
        <begin position="1"/>
        <end position="620"/>
    </location>
</feature>
<protein>
    <recommendedName>
        <fullName>Uncharacterized protein CPn_0512/CP_0242/CPj0512/CpB0533</fullName>
    </recommendedName>
</protein>
<accession>Q9Z840</accession>
<organism>
    <name type="scientific">Chlamydia pneumoniae</name>
    <name type="common">Chlamydophila pneumoniae</name>
    <dbReference type="NCBI Taxonomy" id="83558"/>
    <lineage>
        <taxon>Bacteria</taxon>
        <taxon>Pseudomonadati</taxon>
        <taxon>Chlamydiota</taxon>
        <taxon>Chlamydiia</taxon>
        <taxon>Chlamydiales</taxon>
        <taxon>Chlamydiaceae</taxon>
        <taxon>Chlamydia/Chlamydophila group</taxon>
        <taxon>Chlamydia</taxon>
    </lineage>
</organism>
<name>Y512_CHLPN</name>